<reference key="1">
    <citation type="submission" date="2008-05" db="EMBL/GenBank/DDBJ databases">
        <title>Genome sequence of Helicobacter pylori from the remote Amazon: traces of Asian ancestry of the first Americans.</title>
        <authorList>
            <person name="Kersulyte D."/>
            <person name="Kalia A."/>
            <person name="Gilman R.H."/>
            <person name="Berg D.E."/>
        </authorList>
    </citation>
    <scope>NUCLEOTIDE SEQUENCE [LARGE SCALE GENOMIC DNA]</scope>
    <source>
        <strain>Shi470</strain>
    </source>
</reference>
<feature type="chain" id="PRO_1000091628" description="Ribonuclease HII">
    <location>
        <begin position="1"/>
        <end position="204"/>
    </location>
</feature>
<feature type="domain" description="RNase H type-2" evidence="2">
    <location>
        <begin position="1"/>
        <end position="197"/>
    </location>
</feature>
<feature type="binding site" evidence="1">
    <location>
        <position position="6"/>
    </location>
    <ligand>
        <name>a divalent metal cation</name>
        <dbReference type="ChEBI" id="CHEBI:60240"/>
    </ligand>
</feature>
<feature type="binding site" evidence="1">
    <location>
        <position position="7"/>
    </location>
    <ligand>
        <name>a divalent metal cation</name>
        <dbReference type="ChEBI" id="CHEBI:60240"/>
    </ligand>
</feature>
<feature type="binding site" evidence="1">
    <location>
        <position position="103"/>
    </location>
    <ligand>
        <name>a divalent metal cation</name>
        <dbReference type="ChEBI" id="CHEBI:60240"/>
    </ligand>
</feature>
<protein>
    <recommendedName>
        <fullName evidence="1">Ribonuclease HII</fullName>
        <shortName evidence="1">RNase HII</shortName>
        <ecNumber evidence="1">3.1.26.4</ecNumber>
    </recommendedName>
</protein>
<organism>
    <name type="scientific">Helicobacter pylori (strain Shi470)</name>
    <dbReference type="NCBI Taxonomy" id="512562"/>
    <lineage>
        <taxon>Bacteria</taxon>
        <taxon>Pseudomonadati</taxon>
        <taxon>Campylobacterota</taxon>
        <taxon>Epsilonproteobacteria</taxon>
        <taxon>Campylobacterales</taxon>
        <taxon>Helicobacteraceae</taxon>
        <taxon>Helicobacter</taxon>
    </lineage>
</organism>
<dbReference type="EC" id="3.1.26.4" evidence="1"/>
<dbReference type="EMBL" id="CP001072">
    <property type="protein sequence ID" value="ACD48768.1"/>
    <property type="molecule type" value="Genomic_DNA"/>
</dbReference>
<dbReference type="RefSeq" id="WP_000600305.1">
    <property type="nucleotide sequence ID" value="NC_010698.2"/>
</dbReference>
<dbReference type="SMR" id="B2UV86"/>
<dbReference type="KEGG" id="hps:HPSH_06840"/>
<dbReference type="HOGENOM" id="CLU_036532_3_1_7"/>
<dbReference type="GO" id="GO:0005737">
    <property type="term" value="C:cytoplasm"/>
    <property type="evidence" value="ECO:0007669"/>
    <property type="project" value="UniProtKB-SubCell"/>
</dbReference>
<dbReference type="GO" id="GO:0032299">
    <property type="term" value="C:ribonuclease H2 complex"/>
    <property type="evidence" value="ECO:0007669"/>
    <property type="project" value="TreeGrafter"/>
</dbReference>
<dbReference type="GO" id="GO:0030145">
    <property type="term" value="F:manganese ion binding"/>
    <property type="evidence" value="ECO:0007669"/>
    <property type="project" value="UniProtKB-UniRule"/>
</dbReference>
<dbReference type="GO" id="GO:0003723">
    <property type="term" value="F:RNA binding"/>
    <property type="evidence" value="ECO:0007669"/>
    <property type="project" value="InterPro"/>
</dbReference>
<dbReference type="GO" id="GO:0004523">
    <property type="term" value="F:RNA-DNA hybrid ribonuclease activity"/>
    <property type="evidence" value="ECO:0007669"/>
    <property type="project" value="UniProtKB-UniRule"/>
</dbReference>
<dbReference type="GO" id="GO:0043137">
    <property type="term" value="P:DNA replication, removal of RNA primer"/>
    <property type="evidence" value="ECO:0007669"/>
    <property type="project" value="TreeGrafter"/>
</dbReference>
<dbReference type="GO" id="GO:0006298">
    <property type="term" value="P:mismatch repair"/>
    <property type="evidence" value="ECO:0007669"/>
    <property type="project" value="TreeGrafter"/>
</dbReference>
<dbReference type="CDD" id="cd07182">
    <property type="entry name" value="RNase_HII_bacteria_HII_like"/>
    <property type="match status" value="1"/>
</dbReference>
<dbReference type="Gene3D" id="3.30.420.10">
    <property type="entry name" value="Ribonuclease H-like superfamily/Ribonuclease H"/>
    <property type="match status" value="1"/>
</dbReference>
<dbReference type="HAMAP" id="MF_00052_B">
    <property type="entry name" value="RNase_HII_B"/>
    <property type="match status" value="1"/>
</dbReference>
<dbReference type="InterPro" id="IPR022898">
    <property type="entry name" value="RNase_HII"/>
</dbReference>
<dbReference type="InterPro" id="IPR001352">
    <property type="entry name" value="RNase_HII/HIII"/>
</dbReference>
<dbReference type="InterPro" id="IPR024567">
    <property type="entry name" value="RNase_HII/HIII_dom"/>
</dbReference>
<dbReference type="InterPro" id="IPR012337">
    <property type="entry name" value="RNaseH-like_sf"/>
</dbReference>
<dbReference type="InterPro" id="IPR036397">
    <property type="entry name" value="RNaseH_sf"/>
</dbReference>
<dbReference type="NCBIfam" id="NF000595">
    <property type="entry name" value="PRK00015.1-3"/>
    <property type="match status" value="1"/>
</dbReference>
<dbReference type="NCBIfam" id="NF011119">
    <property type="entry name" value="PRK14550.1"/>
    <property type="match status" value="1"/>
</dbReference>
<dbReference type="PANTHER" id="PTHR10954">
    <property type="entry name" value="RIBONUCLEASE H2 SUBUNIT A"/>
    <property type="match status" value="1"/>
</dbReference>
<dbReference type="PANTHER" id="PTHR10954:SF18">
    <property type="entry name" value="RIBONUCLEASE HII"/>
    <property type="match status" value="1"/>
</dbReference>
<dbReference type="Pfam" id="PF01351">
    <property type="entry name" value="RNase_HII"/>
    <property type="match status" value="1"/>
</dbReference>
<dbReference type="SUPFAM" id="SSF53098">
    <property type="entry name" value="Ribonuclease H-like"/>
    <property type="match status" value="1"/>
</dbReference>
<dbReference type="PROSITE" id="PS51975">
    <property type="entry name" value="RNASE_H_2"/>
    <property type="match status" value="1"/>
</dbReference>
<comment type="function">
    <text evidence="1">Endonuclease that specifically degrades the RNA of RNA-DNA hybrids.</text>
</comment>
<comment type="catalytic activity">
    <reaction evidence="1">
        <text>Endonucleolytic cleavage to 5'-phosphomonoester.</text>
        <dbReference type="EC" id="3.1.26.4"/>
    </reaction>
</comment>
<comment type="cofactor">
    <cofactor evidence="1">
        <name>Mn(2+)</name>
        <dbReference type="ChEBI" id="CHEBI:29035"/>
    </cofactor>
    <cofactor evidence="1">
        <name>Mg(2+)</name>
        <dbReference type="ChEBI" id="CHEBI:18420"/>
    </cofactor>
    <text evidence="1">Manganese or magnesium. Binds 1 divalent metal ion per monomer in the absence of substrate. May bind a second metal ion after substrate binding.</text>
</comment>
<comment type="subcellular location">
    <subcellularLocation>
        <location evidence="1">Cytoplasm</location>
    </subcellularLocation>
</comment>
<comment type="similarity">
    <text evidence="1">Belongs to the RNase HII family.</text>
</comment>
<proteinExistence type="inferred from homology"/>
<accession>B2UV86</accession>
<gene>
    <name evidence="1" type="primary">rnhB</name>
    <name type="ordered locus">HPSH_06840</name>
</gene>
<sequence>MILGIDEAGRGCLAGSLFVAGVVCGEKTALEFLEMGLKDSKKLGPKKRFFLEDKIKTHGEIKFWVVKKSANEIDNLGLGACLKLAVQEILENGRSLANQIKIDGNTAFGLNKRYPNIQTIIKGDERIAQIAMASVLAKAFKDREMRQLHALFKEYGWDKNCGYGTKQHIEAMIKLGATPFHRHSFTLKNRILNPKLLDVEQRLI</sequence>
<name>RNH2_HELPS</name>
<keyword id="KW-0963">Cytoplasm</keyword>
<keyword id="KW-0255">Endonuclease</keyword>
<keyword id="KW-0378">Hydrolase</keyword>
<keyword id="KW-0464">Manganese</keyword>
<keyword id="KW-0479">Metal-binding</keyword>
<keyword id="KW-0540">Nuclease</keyword>
<evidence type="ECO:0000255" key="1">
    <source>
        <dbReference type="HAMAP-Rule" id="MF_00052"/>
    </source>
</evidence>
<evidence type="ECO:0000255" key="2">
    <source>
        <dbReference type="PROSITE-ProRule" id="PRU01319"/>
    </source>
</evidence>